<feature type="chain" id="PRO_1000212660" description="Probable glycine dehydrogenase (decarboxylating) subunit 1">
    <location>
        <begin position="1"/>
        <end position="443"/>
    </location>
</feature>
<reference key="1">
    <citation type="journal article" date="2009" name="Genome Res.">
        <title>Whole genome sequence of Desulfovibrio magneticus strain RS-1 revealed common gene clusters in magnetotactic bacteria.</title>
        <authorList>
            <person name="Nakazawa H."/>
            <person name="Arakaki A."/>
            <person name="Narita-Yamada S."/>
            <person name="Yashiro I."/>
            <person name="Jinno K."/>
            <person name="Aoki N."/>
            <person name="Tsuruyama A."/>
            <person name="Okamura Y."/>
            <person name="Tanikawa S."/>
            <person name="Fujita N."/>
            <person name="Takeyama H."/>
            <person name="Matsunaga T."/>
        </authorList>
    </citation>
    <scope>NUCLEOTIDE SEQUENCE [LARGE SCALE GENOMIC DNA]</scope>
    <source>
        <strain>ATCC 700980 / DSM 13731 / RS-1</strain>
    </source>
</reference>
<name>GCSPA_SOLM1</name>
<proteinExistence type="inferred from homology"/>
<comment type="function">
    <text evidence="1">The glycine cleavage system catalyzes the degradation of glycine. The P protein binds the alpha-amino group of glycine through its pyridoxal phosphate cofactor; CO(2) is released and the remaining methylamine moiety is then transferred to the lipoamide cofactor of the H protein.</text>
</comment>
<comment type="catalytic activity">
    <reaction evidence="1">
        <text>N(6)-[(R)-lipoyl]-L-lysyl-[glycine-cleavage complex H protein] + glycine + H(+) = N(6)-[(R)-S(8)-aminomethyldihydrolipoyl]-L-lysyl-[glycine-cleavage complex H protein] + CO2</text>
        <dbReference type="Rhea" id="RHEA:24304"/>
        <dbReference type="Rhea" id="RHEA-COMP:10494"/>
        <dbReference type="Rhea" id="RHEA-COMP:10495"/>
        <dbReference type="ChEBI" id="CHEBI:15378"/>
        <dbReference type="ChEBI" id="CHEBI:16526"/>
        <dbReference type="ChEBI" id="CHEBI:57305"/>
        <dbReference type="ChEBI" id="CHEBI:83099"/>
        <dbReference type="ChEBI" id="CHEBI:83143"/>
        <dbReference type="EC" id="1.4.4.2"/>
    </reaction>
</comment>
<comment type="subunit">
    <text evidence="1">The glycine cleavage system is composed of four proteins: P, T, L and H. In this organism, the P 'protein' is a heterodimer of two subunits.</text>
</comment>
<comment type="similarity">
    <text evidence="1">Belongs to the GcvP family. N-terminal subunit subfamily.</text>
</comment>
<evidence type="ECO:0000255" key="1">
    <source>
        <dbReference type="HAMAP-Rule" id="MF_00712"/>
    </source>
</evidence>
<gene>
    <name evidence="1" type="primary">gcvPA</name>
    <name type="ordered locus">DMR_31780</name>
</gene>
<organism>
    <name type="scientific">Solidesulfovibrio magneticus (strain ATCC 700980 / DSM 13731 / RS-1)</name>
    <name type="common">Desulfovibrio magneticus</name>
    <dbReference type="NCBI Taxonomy" id="573370"/>
    <lineage>
        <taxon>Bacteria</taxon>
        <taxon>Pseudomonadati</taxon>
        <taxon>Thermodesulfobacteriota</taxon>
        <taxon>Desulfovibrionia</taxon>
        <taxon>Desulfovibrionales</taxon>
        <taxon>Desulfovibrionaceae</taxon>
        <taxon>Solidesulfovibrio</taxon>
    </lineage>
</organism>
<dbReference type="EC" id="1.4.4.2" evidence="1"/>
<dbReference type="EMBL" id="AP010904">
    <property type="protein sequence ID" value="BAH76669.1"/>
    <property type="molecule type" value="Genomic_DNA"/>
</dbReference>
<dbReference type="RefSeq" id="WP_015861821.1">
    <property type="nucleotide sequence ID" value="NC_012796.1"/>
</dbReference>
<dbReference type="SMR" id="C4XJB9"/>
<dbReference type="STRING" id="573370.DMR_31780"/>
<dbReference type="KEGG" id="dma:DMR_31780"/>
<dbReference type="eggNOG" id="COG0403">
    <property type="taxonomic scope" value="Bacteria"/>
</dbReference>
<dbReference type="HOGENOM" id="CLU_004620_0_2_7"/>
<dbReference type="OrthoDB" id="9801272at2"/>
<dbReference type="Proteomes" id="UP000009071">
    <property type="component" value="Chromosome"/>
</dbReference>
<dbReference type="GO" id="GO:0004375">
    <property type="term" value="F:glycine dehydrogenase (decarboxylating) activity"/>
    <property type="evidence" value="ECO:0007669"/>
    <property type="project" value="UniProtKB-EC"/>
</dbReference>
<dbReference type="GO" id="GO:0019464">
    <property type="term" value="P:glycine decarboxylation via glycine cleavage system"/>
    <property type="evidence" value="ECO:0007669"/>
    <property type="project" value="UniProtKB-UniRule"/>
</dbReference>
<dbReference type="GO" id="GO:0009116">
    <property type="term" value="P:nucleoside metabolic process"/>
    <property type="evidence" value="ECO:0007669"/>
    <property type="project" value="InterPro"/>
</dbReference>
<dbReference type="CDD" id="cd00613">
    <property type="entry name" value="GDC-P"/>
    <property type="match status" value="1"/>
</dbReference>
<dbReference type="Gene3D" id="3.90.1150.10">
    <property type="entry name" value="Aspartate Aminotransferase, domain 1"/>
    <property type="match status" value="1"/>
</dbReference>
<dbReference type="Gene3D" id="3.40.640.10">
    <property type="entry name" value="Type I PLP-dependent aspartate aminotransferase-like (Major domain)"/>
    <property type="match status" value="1"/>
</dbReference>
<dbReference type="HAMAP" id="MF_00712">
    <property type="entry name" value="GcvPA"/>
    <property type="match status" value="1"/>
</dbReference>
<dbReference type="InterPro" id="IPR023010">
    <property type="entry name" value="GcvPA"/>
</dbReference>
<dbReference type="InterPro" id="IPR049315">
    <property type="entry name" value="GDC-P_N"/>
</dbReference>
<dbReference type="InterPro" id="IPR020581">
    <property type="entry name" value="GDC_P"/>
</dbReference>
<dbReference type="InterPro" id="IPR015424">
    <property type="entry name" value="PyrdxlP-dep_Trfase"/>
</dbReference>
<dbReference type="InterPro" id="IPR015421">
    <property type="entry name" value="PyrdxlP-dep_Trfase_major"/>
</dbReference>
<dbReference type="InterPro" id="IPR015422">
    <property type="entry name" value="PyrdxlP-dep_Trfase_small"/>
</dbReference>
<dbReference type="NCBIfam" id="NF001696">
    <property type="entry name" value="PRK00451.1"/>
    <property type="match status" value="1"/>
</dbReference>
<dbReference type="PANTHER" id="PTHR42806">
    <property type="entry name" value="GLYCINE CLEAVAGE SYSTEM P-PROTEIN"/>
    <property type="match status" value="1"/>
</dbReference>
<dbReference type="PANTHER" id="PTHR42806:SF1">
    <property type="entry name" value="GLYCINE DEHYDROGENASE (DECARBOXYLATING)"/>
    <property type="match status" value="1"/>
</dbReference>
<dbReference type="Pfam" id="PF02347">
    <property type="entry name" value="GDC-P"/>
    <property type="match status" value="1"/>
</dbReference>
<dbReference type="PIRSF" id="PIRSF006815">
    <property type="entry name" value="GcvPA"/>
    <property type="match status" value="1"/>
</dbReference>
<dbReference type="SUPFAM" id="SSF53383">
    <property type="entry name" value="PLP-dependent transferases"/>
    <property type="match status" value="1"/>
</dbReference>
<accession>C4XJB9</accession>
<sequence>MPYIPHTPAEIREMLDAVGAPDVDALFAEIPAALRPQSFDLAKGATEMAVRAAMEKLSAKNRTDLTSFLGGGFYDHYVPAASDLLLSRGEFYTAYTPYQPEASQGTLQAIFEYQTAVCRLMDMECSNAGVYDGGTALYEALMMAVRHTRRKKAVVSETVSPIYRIVLATYTKNLHLDLVVVPHKNGLDDFEALTAAVDGDTAAIVVQNPNFFGSVQDFTALFDHAREKGAVSVISCYPVLQTVLKTPGAMGADIATAEGQSLGLPLSFGGPYLGIMTCKKSLVRQMPGRIAGRTKDAAGRTGYVLTLQAREQHIRRQKATSNICSNQALCALRALINLCLTGNEGLSRQAARSIENANYAAWKLGAIPGVKLLNEAPFGNEFAAVFPVNAKQVARMLMDGGIVPGFPLGRYYQGLENALLICCTEKHDRADIDRLARRLENAL</sequence>
<protein>
    <recommendedName>
        <fullName evidence="1">Probable glycine dehydrogenase (decarboxylating) subunit 1</fullName>
        <ecNumber evidence="1">1.4.4.2</ecNumber>
    </recommendedName>
    <alternativeName>
        <fullName evidence="1">Glycine cleavage system P-protein subunit 1</fullName>
    </alternativeName>
    <alternativeName>
        <fullName evidence="1">Glycine decarboxylase subunit 1</fullName>
    </alternativeName>
    <alternativeName>
        <fullName evidence="1">Glycine dehydrogenase (aminomethyl-transferring) subunit 1</fullName>
    </alternativeName>
</protein>
<keyword id="KW-0560">Oxidoreductase</keyword>